<feature type="chain" id="PRO_1000003609" description="Small ribosomal subunit protein bS18">
    <location>
        <begin position="1"/>
        <end position="75"/>
    </location>
</feature>
<organism>
    <name type="scientific">Shewanella sp. (strain W3-18-1)</name>
    <dbReference type="NCBI Taxonomy" id="351745"/>
    <lineage>
        <taxon>Bacteria</taxon>
        <taxon>Pseudomonadati</taxon>
        <taxon>Pseudomonadota</taxon>
        <taxon>Gammaproteobacteria</taxon>
        <taxon>Alteromonadales</taxon>
        <taxon>Shewanellaceae</taxon>
        <taxon>Shewanella</taxon>
    </lineage>
</organism>
<sequence length="75" mass="8845">MARYFRRRKFCRFTAEGVAEIDYKDIVTLKNYITESGKIVPSRITGTSAKYQRQLARAIKRARYLSLLPYTDLHQ</sequence>
<evidence type="ECO:0000255" key="1">
    <source>
        <dbReference type="HAMAP-Rule" id="MF_00270"/>
    </source>
</evidence>
<evidence type="ECO:0000305" key="2"/>
<protein>
    <recommendedName>
        <fullName evidence="1">Small ribosomal subunit protein bS18</fullName>
    </recommendedName>
    <alternativeName>
        <fullName evidence="2">30S ribosomal protein S18</fullName>
    </alternativeName>
</protein>
<reference key="1">
    <citation type="submission" date="2006-12" db="EMBL/GenBank/DDBJ databases">
        <title>Complete sequence of Shewanella sp. W3-18-1.</title>
        <authorList>
            <consortium name="US DOE Joint Genome Institute"/>
            <person name="Copeland A."/>
            <person name="Lucas S."/>
            <person name="Lapidus A."/>
            <person name="Barry K."/>
            <person name="Detter J.C."/>
            <person name="Glavina del Rio T."/>
            <person name="Hammon N."/>
            <person name="Israni S."/>
            <person name="Dalin E."/>
            <person name="Tice H."/>
            <person name="Pitluck S."/>
            <person name="Chain P."/>
            <person name="Malfatti S."/>
            <person name="Shin M."/>
            <person name="Vergez L."/>
            <person name="Schmutz J."/>
            <person name="Larimer F."/>
            <person name="Land M."/>
            <person name="Hauser L."/>
            <person name="Kyrpides N."/>
            <person name="Lykidis A."/>
            <person name="Tiedje J."/>
            <person name="Richardson P."/>
        </authorList>
    </citation>
    <scope>NUCLEOTIDE SEQUENCE [LARGE SCALE GENOMIC DNA]</scope>
    <source>
        <strain>W3-18-1</strain>
    </source>
</reference>
<proteinExistence type="inferred from homology"/>
<name>RS18_SHESW</name>
<keyword id="KW-0687">Ribonucleoprotein</keyword>
<keyword id="KW-0689">Ribosomal protein</keyword>
<keyword id="KW-0694">RNA-binding</keyword>
<keyword id="KW-0699">rRNA-binding</keyword>
<comment type="function">
    <text evidence="1">Binds as a heterodimer with protein bS6 to the central domain of the 16S rRNA, where it helps stabilize the platform of the 30S subunit.</text>
</comment>
<comment type="subunit">
    <text evidence="1">Part of the 30S ribosomal subunit. Forms a tight heterodimer with protein bS6.</text>
</comment>
<comment type="similarity">
    <text evidence="1">Belongs to the bacterial ribosomal protein bS18 family.</text>
</comment>
<dbReference type="EMBL" id="CP000503">
    <property type="protein sequence ID" value="ABM26232.1"/>
    <property type="molecule type" value="Genomic_DNA"/>
</dbReference>
<dbReference type="RefSeq" id="WP_006083042.1">
    <property type="nucleotide sequence ID" value="NC_008750.1"/>
</dbReference>
<dbReference type="SMR" id="A1RNI7"/>
<dbReference type="GeneID" id="94726693"/>
<dbReference type="KEGG" id="shw:Sputw3181_3420"/>
<dbReference type="HOGENOM" id="CLU_148710_2_3_6"/>
<dbReference type="Proteomes" id="UP000002597">
    <property type="component" value="Chromosome"/>
</dbReference>
<dbReference type="GO" id="GO:0022627">
    <property type="term" value="C:cytosolic small ribosomal subunit"/>
    <property type="evidence" value="ECO:0007669"/>
    <property type="project" value="TreeGrafter"/>
</dbReference>
<dbReference type="GO" id="GO:0070181">
    <property type="term" value="F:small ribosomal subunit rRNA binding"/>
    <property type="evidence" value="ECO:0007669"/>
    <property type="project" value="TreeGrafter"/>
</dbReference>
<dbReference type="GO" id="GO:0003735">
    <property type="term" value="F:structural constituent of ribosome"/>
    <property type="evidence" value="ECO:0007669"/>
    <property type="project" value="InterPro"/>
</dbReference>
<dbReference type="GO" id="GO:0006412">
    <property type="term" value="P:translation"/>
    <property type="evidence" value="ECO:0007669"/>
    <property type="project" value="UniProtKB-UniRule"/>
</dbReference>
<dbReference type="FunFam" id="4.10.640.10:FF:000001">
    <property type="entry name" value="30S ribosomal protein S18"/>
    <property type="match status" value="1"/>
</dbReference>
<dbReference type="Gene3D" id="4.10.640.10">
    <property type="entry name" value="Ribosomal protein S18"/>
    <property type="match status" value="1"/>
</dbReference>
<dbReference type="HAMAP" id="MF_00270">
    <property type="entry name" value="Ribosomal_bS18"/>
    <property type="match status" value="1"/>
</dbReference>
<dbReference type="InterPro" id="IPR001648">
    <property type="entry name" value="Ribosomal_bS18"/>
</dbReference>
<dbReference type="InterPro" id="IPR018275">
    <property type="entry name" value="Ribosomal_bS18_CS"/>
</dbReference>
<dbReference type="InterPro" id="IPR036870">
    <property type="entry name" value="Ribosomal_bS18_sf"/>
</dbReference>
<dbReference type="NCBIfam" id="TIGR00165">
    <property type="entry name" value="S18"/>
    <property type="match status" value="1"/>
</dbReference>
<dbReference type="PANTHER" id="PTHR13479">
    <property type="entry name" value="30S RIBOSOMAL PROTEIN S18"/>
    <property type="match status" value="1"/>
</dbReference>
<dbReference type="PANTHER" id="PTHR13479:SF40">
    <property type="entry name" value="SMALL RIBOSOMAL SUBUNIT PROTEIN BS18M"/>
    <property type="match status" value="1"/>
</dbReference>
<dbReference type="Pfam" id="PF01084">
    <property type="entry name" value="Ribosomal_S18"/>
    <property type="match status" value="1"/>
</dbReference>
<dbReference type="PRINTS" id="PR00974">
    <property type="entry name" value="RIBOSOMALS18"/>
</dbReference>
<dbReference type="SUPFAM" id="SSF46911">
    <property type="entry name" value="Ribosomal protein S18"/>
    <property type="match status" value="1"/>
</dbReference>
<dbReference type="PROSITE" id="PS00057">
    <property type="entry name" value="RIBOSOMAL_S18"/>
    <property type="match status" value="1"/>
</dbReference>
<gene>
    <name evidence="1" type="primary">rpsR</name>
    <name type="ordered locus">Sputw3181_3420</name>
</gene>
<accession>A1RNI7</accession>